<proteinExistence type="inferred from homology"/>
<name>KUP_ECOK1</name>
<accession>A1AHS7</accession>
<reference key="1">
    <citation type="journal article" date="2007" name="J. Bacteriol.">
        <title>The genome sequence of avian pathogenic Escherichia coli strain O1:K1:H7 shares strong similarities with human extraintestinal pathogenic E. coli genomes.</title>
        <authorList>
            <person name="Johnson T.J."/>
            <person name="Kariyawasam S."/>
            <person name="Wannemuehler Y."/>
            <person name="Mangiamele P."/>
            <person name="Johnson S.J."/>
            <person name="Doetkott C."/>
            <person name="Skyberg J.A."/>
            <person name="Lynne A.M."/>
            <person name="Johnson J.R."/>
            <person name="Nolan L.K."/>
        </authorList>
    </citation>
    <scope>NUCLEOTIDE SEQUENCE [LARGE SCALE GENOMIC DNA]</scope>
</reference>
<protein>
    <recommendedName>
        <fullName evidence="1">Low affinity potassium transport system protein Kup</fullName>
    </recommendedName>
    <alternativeName>
        <fullName evidence="1">Kup system potassium uptake protein</fullName>
    </alternativeName>
</protein>
<sequence length="622" mass="69294">MSTDNKQSLPAITLAAIGVVYGDIGTSPLYTLRECLSGQFGFGVERDAVFGFLSLIFWLLIFVVSIKYLTFVMRADNAGEGGILTLMSLAGRNTSARTTSMLVIMGLIGGSFFYGEVVITPAISVMSAIEGLEIVAPQLDTWIVPLSIIVLTLLFMIQKHGTAMVGKLFAPIMLTWFLILAGLGLRSIIANPEVLHALNPMWAVHFFLEYKTVSFIALGAVVLSITGVEALYADMGHFGKFPIRLAWFTVVLPSLTLNYFGQGALLLKNPEAIKNPFFLLAPDWALIPLLIIAALATVIASQAVISGVFSLTRQAVRLGYLSPMRIIHTSEMESGQIYIPFVNWMLYVAVVIVIVSFEHSSNLAAAYGIAVTGTMVLTSILSTTVARQNWHWNKYFVALILIAFLCVDIPLFTANLDKLLSGGWLPLSLGTVMFIVMTTWKSERFRLLRRMHEHGNSLEAMIASLEKSPPVRVPGTAVYMSRAINVIPFALMHNLKHNKVLHERVILLTLRTEDAPYVHNVRRVQIEQLSPTFWRVVASYGWRETPNVEEVFHRCGLEGLSCRMMETSFFMSHESLILGKRPWYLRLRGKLYLLLQRNALRAPDQFEIPPNRVIELGTQVEI</sequence>
<feature type="chain" id="PRO_0000279784" description="Low affinity potassium transport system protein Kup">
    <location>
        <begin position="1"/>
        <end position="622"/>
    </location>
</feature>
<feature type="transmembrane region" description="Helical" evidence="1">
    <location>
        <begin position="9"/>
        <end position="29"/>
    </location>
</feature>
<feature type="transmembrane region" description="Helical" evidence="1">
    <location>
        <begin position="49"/>
        <end position="69"/>
    </location>
</feature>
<feature type="transmembrane region" description="Helical" evidence="1">
    <location>
        <begin position="103"/>
        <end position="123"/>
    </location>
</feature>
<feature type="transmembrane region" description="Helical" evidence="1">
    <location>
        <begin position="137"/>
        <end position="157"/>
    </location>
</feature>
<feature type="transmembrane region" description="Helical" evidence="1">
    <location>
        <begin position="165"/>
        <end position="185"/>
    </location>
</feature>
<feature type="transmembrane region" description="Helical" evidence="1">
    <location>
        <begin position="213"/>
        <end position="233"/>
    </location>
</feature>
<feature type="transmembrane region" description="Helical" evidence="1">
    <location>
        <begin position="247"/>
        <end position="267"/>
    </location>
</feature>
<feature type="transmembrane region" description="Helical" evidence="1">
    <location>
        <begin position="276"/>
        <end position="296"/>
    </location>
</feature>
<feature type="transmembrane region" description="Helical" evidence="1">
    <location>
        <begin position="337"/>
        <end position="357"/>
    </location>
</feature>
<feature type="transmembrane region" description="Helical" evidence="1">
    <location>
        <begin position="363"/>
        <end position="383"/>
    </location>
</feature>
<feature type="transmembrane region" description="Helical" evidence="1">
    <location>
        <begin position="396"/>
        <end position="416"/>
    </location>
</feature>
<feature type="transmembrane region" description="Helical" evidence="1">
    <location>
        <begin position="419"/>
        <end position="439"/>
    </location>
</feature>
<comment type="function">
    <text evidence="1">Responsible for the low-affinity transport of potassium into the cell. Likely operates as a K(+):H(+) symporter.</text>
</comment>
<comment type="catalytic activity">
    <reaction evidence="1">
        <text>K(+)(in) + H(+)(in) = K(+)(out) + H(+)(out)</text>
        <dbReference type="Rhea" id="RHEA:28490"/>
        <dbReference type="ChEBI" id="CHEBI:15378"/>
        <dbReference type="ChEBI" id="CHEBI:29103"/>
    </reaction>
    <physiologicalReaction direction="right-to-left" evidence="1">
        <dbReference type="Rhea" id="RHEA:28492"/>
    </physiologicalReaction>
</comment>
<comment type="subcellular location">
    <subcellularLocation>
        <location evidence="1">Cell inner membrane</location>
        <topology evidence="1">Multi-pass membrane protein</topology>
    </subcellularLocation>
</comment>
<comment type="similarity">
    <text evidence="1">Belongs to the HAK/KUP transporter (TC 2.A.72) family.</text>
</comment>
<keyword id="KW-0997">Cell inner membrane</keyword>
<keyword id="KW-1003">Cell membrane</keyword>
<keyword id="KW-0406">Ion transport</keyword>
<keyword id="KW-0472">Membrane</keyword>
<keyword id="KW-0630">Potassium</keyword>
<keyword id="KW-0633">Potassium transport</keyword>
<keyword id="KW-1185">Reference proteome</keyword>
<keyword id="KW-0769">Symport</keyword>
<keyword id="KW-0812">Transmembrane</keyword>
<keyword id="KW-1133">Transmembrane helix</keyword>
<keyword id="KW-0813">Transport</keyword>
<organism>
    <name type="scientific">Escherichia coli O1:K1 / APEC</name>
    <dbReference type="NCBI Taxonomy" id="405955"/>
    <lineage>
        <taxon>Bacteria</taxon>
        <taxon>Pseudomonadati</taxon>
        <taxon>Pseudomonadota</taxon>
        <taxon>Gammaproteobacteria</taxon>
        <taxon>Enterobacterales</taxon>
        <taxon>Enterobacteriaceae</taxon>
        <taxon>Escherichia</taxon>
    </lineage>
</organism>
<evidence type="ECO:0000255" key="1">
    <source>
        <dbReference type="HAMAP-Rule" id="MF_01522"/>
    </source>
</evidence>
<gene>
    <name evidence="1" type="primary">kup</name>
    <name type="ordered locus">Ecok1_37230</name>
    <name type="ORF">APECO1_2716</name>
</gene>
<dbReference type="EMBL" id="CP000468">
    <property type="protein sequence ID" value="ABJ03217.1"/>
    <property type="molecule type" value="Genomic_DNA"/>
</dbReference>
<dbReference type="RefSeq" id="WP_000102319.1">
    <property type="nucleotide sequence ID" value="NZ_CADILS010000011.1"/>
</dbReference>
<dbReference type="GeneID" id="75205465"/>
<dbReference type="KEGG" id="ecv:APECO1_2716"/>
<dbReference type="HOGENOM" id="CLU_008142_4_2_6"/>
<dbReference type="Proteomes" id="UP000008216">
    <property type="component" value="Chromosome"/>
</dbReference>
<dbReference type="GO" id="GO:0005886">
    <property type="term" value="C:plasma membrane"/>
    <property type="evidence" value="ECO:0007669"/>
    <property type="project" value="UniProtKB-SubCell"/>
</dbReference>
<dbReference type="GO" id="GO:0015079">
    <property type="term" value="F:potassium ion transmembrane transporter activity"/>
    <property type="evidence" value="ECO:0007669"/>
    <property type="project" value="UniProtKB-UniRule"/>
</dbReference>
<dbReference type="GO" id="GO:0015293">
    <property type="term" value="F:symporter activity"/>
    <property type="evidence" value="ECO:0007669"/>
    <property type="project" value="UniProtKB-UniRule"/>
</dbReference>
<dbReference type="HAMAP" id="MF_01522">
    <property type="entry name" value="Kup"/>
    <property type="match status" value="1"/>
</dbReference>
<dbReference type="InterPro" id="IPR003855">
    <property type="entry name" value="K+_transporter"/>
</dbReference>
<dbReference type="InterPro" id="IPR053952">
    <property type="entry name" value="K_trans_C"/>
</dbReference>
<dbReference type="InterPro" id="IPR053951">
    <property type="entry name" value="K_trans_N"/>
</dbReference>
<dbReference type="InterPro" id="IPR023051">
    <property type="entry name" value="Kup"/>
</dbReference>
<dbReference type="NCBIfam" id="TIGR00794">
    <property type="entry name" value="kup"/>
    <property type="match status" value="1"/>
</dbReference>
<dbReference type="NCBIfam" id="NF008015">
    <property type="entry name" value="PRK10745.1"/>
    <property type="match status" value="1"/>
</dbReference>
<dbReference type="PANTHER" id="PTHR30540:SF79">
    <property type="entry name" value="LOW AFFINITY POTASSIUM TRANSPORT SYSTEM PROTEIN KUP"/>
    <property type="match status" value="1"/>
</dbReference>
<dbReference type="PANTHER" id="PTHR30540">
    <property type="entry name" value="OSMOTIC STRESS POTASSIUM TRANSPORTER"/>
    <property type="match status" value="1"/>
</dbReference>
<dbReference type="Pfam" id="PF02705">
    <property type="entry name" value="K_trans"/>
    <property type="match status" value="1"/>
</dbReference>
<dbReference type="Pfam" id="PF22776">
    <property type="entry name" value="K_trans_C"/>
    <property type="match status" value="1"/>
</dbReference>